<feature type="chain" id="PRO_0000237352" description="Glutamate--tRNA ligase">
    <location>
        <begin position="1"/>
        <end position="505"/>
    </location>
</feature>
<feature type="short sequence motif" description="'HIGH' region" evidence="1">
    <location>
        <begin position="12"/>
        <end position="22"/>
    </location>
</feature>
<feature type="short sequence motif" description="'KMSKS' region" evidence="1">
    <location>
        <begin position="253"/>
        <end position="257"/>
    </location>
</feature>
<feature type="binding site" evidence="1">
    <location>
        <position position="256"/>
    </location>
    <ligand>
        <name>ATP</name>
        <dbReference type="ChEBI" id="CHEBI:30616"/>
    </ligand>
</feature>
<accession>Q5L6T4</accession>
<proteinExistence type="inferred from homology"/>
<comment type="function">
    <text evidence="1">Catalyzes the attachment of glutamate to tRNA(Glu) in a two-step reaction: glutamate is first activated by ATP to form Glu-AMP and then transferred to the acceptor end of tRNA(Glu).</text>
</comment>
<comment type="catalytic activity">
    <reaction evidence="1">
        <text>tRNA(Glu) + L-glutamate + ATP = L-glutamyl-tRNA(Glu) + AMP + diphosphate</text>
        <dbReference type="Rhea" id="RHEA:23540"/>
        <dbReference type="Rhea" id="RHEA-COMP:9663"/>
        <dbReference type="Rhea" id="RHEA-COMP:9680"/>
        <dbReference type="ChEBI" id="CHEBI:29985"/>
        <dbReference type="ChEBI" id="CHEBI:30616"/>
        <dbReference type="ChEBI" id="CHEBI:33019"/>
        <dbReference type="ChEBI" id="CHEBI:78442"/>
        <dbReference type="ChEBI" id="CHEBI:78520"/>
        <dbReference type="ChEBI" id="CHEBI:456215"/>
        <dbReference type="EC" id="6.1.1.17"/>
    </reaction>
</comment>
<comment type="subunit">
    <text evidence="1">Monomer.</text>
</comment>
<comment type="subcellular location">
    <subcellularLocation>
        <location evidence="1">Cytoplasm</location>
    </subcellularLocation>
</comment>
<comment type="similarity">
    <text evidence="1">Belongs to the class-I aminoacyl-tRNA synthetase family. Glutamate--tRNA ligase type 1 subfamily.</text>
</comment>
<protein>
    <recommendedName>
        <fullName evidence="1">Glutamate--tRNA ligase</fullName>
        <ecNumber evidence="1">6.1.1.17</ecNumber>
    </recommendedName>
    <alternativeName>
        <fullName evidence="1">Glutamyl-tRNA synthetase</fullName>
        <shortName evidence="1">GluRS</shortName>
    </alternativeName>
</protein>
<reference key="1">
    <citation type="journal article" date="2005" name="Genome Res.">
        <title>The Chlamydophila abortus genome sequence reveals an array of variable proteins that contribute to interspecies variation.</title>
        <authorList>
            <person name="Thomson N.R."/>
            <person name="Yeats C."/>
            <person name="Bell K."/>
            <person name="Holden M.T.G."/>
            <person name="Bentley S.D."/>
            <person name="Livingstone M."/>
            <person name="Cerdeno-Tarraga A.-M."/>
            <person name="Harris B."/>
            <person name="Doggett J."/>
            <person name="Ormond D."/>
            <person name="Mungall K."/>
            <person name="Clarke K."/>
            <person name="Feltwell T."/>
            <person name="Hance Z."/>
            <person name="Sanders M."/>
            <person name="Quail M.A."/>
            <person name="Price C."/>
            <person name="Barrell B.G."/>
            <person name="Parkhill J."/>
            <person name="Longbottom D."/>
        </authorList>
    </citation>
    <scope>NUCLEOTIDE SEQUENCE [LARGE SCALE GENOMIC DNA]</scope>
    <source>
        <strain>DSM 27085 / S26/3</strain>
    </source>
</reference>
<evidence type="ECO:0000255" key="1">
    <source>
        <dbReference type="HAMAP-Rule" id="MF_00022"/>
    </source>
</evidence>
<name>SYE_CHLAB</name>
<sequence length="505" mass="58455">MAWENVRVRVAPSPTGDPHVGTAYMALFNAIFAKRFNGKMILRIEDTDQTRSRDDYEKNIFSALQWCGIQWDEGPDIGGPYGPYRQSERTEIYRKYAELLLKTDYAYKCFATPKELEEMRAVATTLGYRGGYDRRYRYLSSEEVDARTREGQPYTIRLKVPLTGECVLDDYCKGRVVFPWADVDDQVLIKSDGFPTYHFANVVDDHLMGITHVLRGEEWLSSTPKHLLLYQAFGWKAPTFLHMPLLLNPDGTKLSKRKNPTSIFYYRDAGYIKEAFMNFLTLMGYSMEGDEEIYSLEKLIANFDPRRIGKSGAVFDTRKLDWMNKHYLTHERSSESLLAKLKDWLINDEFFLKILPLCQSRITTLAEFIGFTGFFFSVLPEYSKEELLPTTISQEKAAILLYSYVKYLEKSDLWVKDQFYQGSKWLSSAFQVHHKKVVIPLLYVAITGKKQGLPLFDSMELLGKPRTRARLVHAQNLLGGVPKKIQTTIDKVLKEEDLESKIFEF</sequence>
<keyword id="KW-0030">Aminoacyl-tRNA synthetase</keyword>
<keyword id="KW-0067">ATP-binding</keyword>
<keyword id="KW-0963">Cytoplasm</keyword>
<keyword id="KW-0436">Ligase</keyword>
<keyword id="KW-0547">Nucleotide-binding</keyword>
<keyword id="KW-0648">Protein biosynthesis</keyword>
<organism>
    <name type="scientific">Chlamydia abortus (strain DSM 27085 / S26/3)</name>
    <name type="common">Chlamydophila abortus</name>
    <dbReference type="NCBI Taxonomy" id="218497"/>
    <lineage>
        <taxon>Bacteria</taxon>
        <taxon>Pseudomonadati</taxon>
        <taxon>Chlamydiota</taxon>
        <taxon>Chlamydiia</taxon>
        <taxon>Chlamydiales</taxon>
        <taxon>Chlamydiaceae</taxon>
        <taxon>Chlamydia/Chlamydophila group</taxon>
        <taxon>Chlamydia</taxon>
    </lineage>
</organism>
<dbReference type="EC" id="6.1.1.17" evidence="1"/>
<dbReference type="EMBL" id="CR848038">
    <property type="protein sequence ID" value="CAH63637.1"/>
    <property type="molecule type" value="Genomic_DNA"/>
</dbReference>
<dbReference type="RefSeq" id="WP_011096884.1">
    <property type="nucleotide sequence ID" value="NC_004552.2"/>
</dbReference>
<dbReference type="SMR" id="Q5L6T4"/>
<dbReference type="KEGG" id="cab:CAB179"/>
<dbReference type="eggNOG" id="COG0008">
    <property type="taxonomic scope" value="Bacteria"/>
</dbReference>
<dbReference type="HOGENOM" id="CLU_015768_6_3_0"/>
<dbReference type="OrthoDB" id="9807503at2"/>
<dbReference type="Proteomes" id="UP000001012">
    <property type="component" value="Chromosome"/>
</dbReference>
<dbReference type="GO" id="GO:0005829">
    <property type="term" value="C:cytosol"/>
    <property type="evidence" value="ECO:0007669"/>
    <property type="project" value="TreeGrafter"/>
</dbReference>
<dbReference type="GO" id="GO:0005524">
    <property type="term" value="F:ATP binding"/>
    <property type="evidence" value="ECO:0007669"/>
    <property type="project" value="UniProtKB-UniRule"/>
</dbReference>
<dbReference type="GO" id="GO:0004818">
    <property type="term" value="F:glutamate-tRNA ligase activity"/>
    <property type="evidence" value="ECO:0007669"/>
    <property type="project" value="UniProtKB-UniRule"/>
</dbReference>
<dbReference type="GO" id="GO:0000049">
    <property type="term" value="F:tRNA binding"/>
    <property type="evidence" value="ECO:0007669"/>
    <property type="project" value="InterPro"/>
</dbReference>
<dbReference type="GO" id="GO:0008270">
    <property type="term" value="F:zinc ion binding"/>
    <property type="evidence" value="ECO:0007669"/>
    <property type="project" value="InterPro"/>
</dbReference>
<dbReference type="GO" id="GO:0006424">
    <property type="term" value="P:glutamyl-tRNA aminoacylation"/>
    <property type="evidence" value="ECO:0007669"/>
    <property type="project" value="UniProtKB-UniRule"/>
</dbReference>
<dbReference type="CDD" id="cd00808">
    <property type="entry name" value="GluRS_core"/>
    <property type="match status" value="1"/>
</dbReference>
<dbReference type="FunFam" id="3.40.50.620:FF:000045">
    <property type="entry name" value="Glutamate--tRNA ligase, mitochondrial"/>
    <property type="match status" value="1"/>
</dbReference>
<dbReference type="Gene3D" id="1.10.10.350">
    <property type="match status" value="1"/>
</dbReference>
<dbReference type="Gene3D" id="3.40.50.620">
    <property type="entry name" value="HUPs"/>
    <property type="match status" value="1"/>
</dbReference>
<dbReference type="HAMAP" id="MF_00022">
    <property type="entry name" value="Glu_tRNA_synth_type1"/>
    <property type="match status" value="1"/>
</dbReference>
<dbReference type="InterPro" id="IPR045462">
    <property type="entry name" value="aa-tRNA-synth_I_cd-bd"/>
</dbReference>
<dbReference type="InterPro" id="IPR020751">
    <property type="entry name" value="aa-tRNA-synth_I_codon-bd_sub2"/>
</dbReference>
<dbReference type="InterPro" id="IPR001412">
    <property type="entry name" value="aa-tRNA-synth_I_CS"/>
</dbReference>
<dbReference type="InterPro" id="IPR008925">
    <property type="entry name" value="aa_tRNA-synth_I_cd-bd_sf"/>
</dbReference>
<dbReference type="InterPro" id="IPR004527">
    <property type="entry name" value="Glu-tRNA-ligase_bac/mito"/>
</dbReference>
<dbReference type="InterPro" id="IPR000924">
    <property type="entry name" value="Glu/Gln-tRNA-synth"/>
</dbReference>
<dbReference type="InterPro" id="IPR020058">
    <property type="entry name" value="Glu/Gln-tRNA-synth_Ib_cat-dom"/>
</dbReference>
<dbReference type="InterPro" id="IPR049940">
    <property type="entry name" value="GluQ/Sye"/>
</dbReference>
<dbReference type="InterPro" id="IPR033910">
    <property type="entry name" value="GluRS_core"/>
</dbReference>
<dbReference type="InterPro" id="IPR014729">
    <property type="entry name" value="Rossmann-like_a/b/a_fold"/>
</dbReference>
<dbReference type="NCBIfam" id="TIGR00464">
    <property type="entry name" value="gltX_bact"/>
    <property type="match status" value="1"/>
</dbReference>
<dbReference type="PANTHER" id="PTHR43311">
    <property type="entry name" value="GLUTAMATE--TRNA LIGASE"/>
    <property type="match status" value="1"/>
</dbReference>
<dbReference type="PANTHER" id="PTHR43311:SF2">
    <property type="entry name" value="GLUTAMATE--TRNA LIGASE, MITOCHONDRIAL-RELATED"/>
    <property type="match status" value="1"/>
</dbReference>
<dbReference type="Pfam" id="PF19269">
    <property type="entry name" value="Anticodon_2"/>
    <property type="match status" value="1"/>
</dbReference>
<dbReference type="Pfam" id="PF00749">
    <property type="entry name" value="tRNA-synt_1c"/>
    <property type="match status" value="1"/>
</dbReference>
<dbReference type="PRINTS" id="PR00987">
    <property type="entry name" value="TRNASYNTHGLU"/>
</dbReference>
<dbReference type="SUPFAM" id="SSF48163">
    <property type="entry name" value="An anticodon-binding domain of class I aminoacyl-tRNA synthetases"/>
    <property type="match status" value="1"/>
</dbReference>
<dbReference type="SUPFAM" id="SSF52374">
    <property type="entry name" value="Nucleotidylyl transferase"/>
    <property type="match status" value="1"/>
</dbReference>
<dbReference type="PROSITE" id="PS00178">
    <property type="entry name" value="AA_TRNA_LIGASE_I"/>
    <property type="match status" value="1"/>
</dbReference>
<gene>
    <name evidence="1" type="primary">gltX</name>
    <name type="ordered locus">CAB179</name>
</gene>